<name>UBC35_ARATH</name>
<comment type="function">
    <text evidence="3 4 7">Catalyzes the synthesis of non-canonical poly-ubiquitin chains that are linked through 'Lys-63'. This type of poly-ubiquitination does not lead to protein degradation by the proteasome. Mediates transcriptional activation of target genes. Required for postreplication repair of UV-damaged DNA and for adapting root developmental programs to suboptimal availability of iron.</text>
</comment>
<comment type="catalytic activity">
    <reaction evidence="1 2">
        <text>S-ubiquitinyl-[E1 ubiquitin-activating enzyme]-L-cysteine + [E2 ubiquitin-conjugating enzyme]-L-cysteine = [E1 ubiquitin-activating enzyme]-L-cysteine + S-ubiquitinyl-[E2 ubiquitin-conjugating enzyme]-L-cysteine.</text>
        <dbReference type="EC" id="2.3.2.23"/>
    </reaction>
</comment>
<comment type="pathway">
    <text evidence="1">Protein modification; protein ubiquitination.</text>
</comment>
<comment type="subunit">
    <text evidence="4 5 6">Interacts with yeast and human Mms2, with the RING domain of RGLG2 and with UEV1A, UEV1B, UEV1C and UEV1D.</text>
</comment>
<comment type="interaction">
    <interactant intactId="EBI-994120">
        <id>Q94A97</id>
    </interactant>
    <interactant intactId="EBI-714329">
        <id>Q15819</id>
        <label>UBE2V2</label>
    </interactant>
    <organismsDiffer>true</organismsDiffer>
    <experiments>3</experiments>
</comment>
<comment type="alternative products">
    <event type="alternative splicing"/>
    <isoform>
        <id>Q94A97-1</id>
        <name>1</name>
        <sequence type="displayed"/>
    </isoform>
    <isoform>
        <id>Q94A97-2</id>
        <name>2</name>
        <sequence type="described" ref="VSP_034929"/>
    </isoform>
    <isoform>
        <id>Q94A97-3</id>
        <name>3</name>
        <sequence type="described" ref="VSP_034930 VSP_034931"/>
    </isoform>
</comment>
<comment type="tissue specificity">
    <text evidence="3 4 7">Ubiquitously expressed at low level. Mainly expressed in the vasculature.</text>
</comment>
<comment type="induction">
    <text evidence="4 7">Not induced by salt, abscisic acid, mannitol, H(2)O(2), low temperature, MMS or iron.</text>
</comment>
<comment type="disruption phenotype">
    <text evidence="7">No visible phenotype under normal growth conditions or in phosphate-deficient plants. Unable to form branched root hairs in response to iron-deficient conditions.</text>
</comment>
<comment type="miscellaneous">
    <text>Partly functionally redundant with UBC36.</text>
</comment>
<comment type="miscellaneous">
    <molecule>Isoform 2</molecule>
    <text evidence="8">May be due to a competing donor splice site.</text>
</comment>
<comment type="miscellaneous">
    <molecule>Isoform 3</molecule>
    <text evidence="8">May be due to an intron retention.</text>
</comment>
<comment type="similarity">
    <text evidence="1">Belongs to the ubiquitin-conjugating enzyme family.</text>
</comment>
<comment type="sequence caution" evidence="8">
    <conflict type="erroneous gene model prediction">
        <sequence resource="EMBL-CDS" id="AAC83026"/>
    </conflict>
</comment>
<organism>
    <name type="scientific">Arabidopsis thaliana</name>
    <name type="common">Mouse-ear cress</name>
    <dbReference type="NCBI Taxonomy" id="3702"/>
    <lineage>
        <taxon>Eukaryota</taxon>
        <taxon>Viridiplantae</taxon>
        <taxon>Streptophyta</taxon>
        <taxon>Embryophyta</taxon>
        <taxon>Tracheophyta</taxon>
        <taxon>Spermatophyta</taxon>
        <taxon>Magnoliopsida</taxon>
        <taxon>eudicotyledons</taxon>
        <taxon>Gunneridae</taxon>
        <taxon>Pentapetalae</taxon>
        <taxon>rosids</taxon>
        <taxon>malvids</taxon>
        <taxon>Brassicales</taxon>
        <taxon>Brassicaceae</taxon>
        <taxon>Camelineae</taxon>
        <taxon>Arabidopsis</taxon>
    </lineage>
</organism>
<keyword id="KW-0025">Alternative splicing</keyword>
<keyword id="KW-0067">ATP-binding</keyword>
<keyword id="KW-0547">Nucleotide-binding</keyword>
<keyword id="KW-1185">Reference proteome</keyword>
<keyword id="KW-0808">Transferase</keyword>
<keyword id="KW-0833">Ubl conjugation pathway</keyword>
<evidence type="ECO:0000255" key="1">
    <source>
        <dbReference type="PROSITE-ProRule" id="PRU00388"/>
    </source>
</evidence>
<evidence type="ECO:0000255" key="2">
    <source>
        <dbReference type="PROSITE-ProRule" id="PRU10133"/>
    </source>
</evidence>
<evidence type="ECO:0000269" key="3">
    <source>
    </source>
</evidence>
<evidence type="ECO:0000269" key="4">
    <source>
    </source>
</evidence>
<evidence type="ECO:0000269" key="5">
    <source>
    </source>
</evidence>
<evidence type="ECO:0000269" key="6">
    <source>
    </source>
</evidence>
<evidence type="ECO:0000269" key="7">
    <source>
    </source>
</evidence>
<evidence type="ECO:0000305" key="8"/>
<dbReference type="EC" id="2.3.2.23"/>
<dbReference type="EMBL" id="DQ027048">
    <property type="protein sequence ID" value="AAY44874.1"/>
    <property type="molecule type" value="mRNA"/>
</dbReference>
<dbReference type="EMBL" id="AC005679">
    <property type="protein sequence ID" value="AAC83026.1"/>
    <property type="status" value="ALT_SEQ"/>
    <property type="molecule type" value="Genomic_DNA"/>
</dbReference>
<dbReference type="EMBL" id="CP002684">
    <property type="protein sequence ID" value="AEE36165.1"/>
    <property type="molecule type" value="Genomic_DNA"/>
</dbReference>
<dbReference type="EMBL" id="CP002684">
    <property type="protein sequence ID" value="AEE36166.1"/>
    <property type="molecule type" value="Genomic_DNA"/>
</dbReference>
<dbReference type="EMBL" id="AY049261">
    <property type="protein sequence ID" value="AAK83603.1"/>
    <property type="molecule type" value="mRNA"/>
</dbReference>
<dbReference type="EMBL" id="BT000544">
    <property type="protein sequence ID" value="AAN18113.1"/>
    <property type="molecule type" value="mRNA"/>
</dbReference>
<dbReference type="EMBL" id="AY085854">
    <property type="protein sequence ID" value="AAM63067.1"/>
    <property type="molecule type" value="mRNA"/>
</dbReference>
<dbReference type="PIR" id="B96818">
    <property type="entry name" value="B96818"/>
</dbReference>
<dbReference type="RefSeq" id="NP_001031298.1">
    <molecule id="Q94A97-3"/>
    <property type="nucleotide sequence ID" value="NM_001036221.3"/>
</dbReference>
<dbReference type="RefSeq" id="NP_565192.1">
    <molecule id="Q94A97-1"/>
    <property type="nucleotide sequence ID" value="NM_106535.4"/>
</dbReference>
<dbReference type="SMR" id="Q94A97"/>
<dbReference type="BioGRID" id="29443">
    <property type="interactions" value="8"/>
</dbReference>
<dbReference type="FunCoup" id="Q94A97">
    <property type="interactions" value="3974"/>
</dbReference>
<dbReference type="IntAct" id="Q94A97">
    <property type="interactions" value="2"/>
</dbReference>
<dbReference type="STRING" id="3702.Q94A97"/>
<dbReference type="GlyGen" id="Q94A97">
    <property type="glycosylation" value="1 site"/>
</dbReference>
<dbReference type="iPTMnet" id="Q94A97"/>
<dbReference type="PaxDb" id="3702-AT1G78870.1"/>
<dbReference type="ProteomicsDB" id="243215">
    <molecule id="Q94A97-1"/>
</dbReference>
<dbReference type="EnsemblPlants" id="AT1G78870.2">
    <molecule id="Q94A97-1"/>
    <property type="protein sequence ID" value="AT1G78870.2"/>
    <property type="gene ID" value="AT1G78870"/>
</dbReference>
<dbReference type="EnsemblPlants" id="AT1G78870.3">
    <molecule id="Q94A97-3"/>
    <property type="protein sequence ID" value="AT1G78870.3"/>
    <property type="gene ID" value="AT1G78870"/>
</dbReference>
<dbReference type="GeneID" id="844224"/>
<dbReference type="Gramene" id="AT1G78870.2">
    <molecule id="Q94A97-1"/>
    <property type="protein sequence ID" value="AT1G78870.2"/>
    <property type="gene ID" value="AT1G78870"/>
</dbReference>
<dbReference type="Gramene" id="AT1G78870.3">
    <molecule id="Q94A97-3"/>
    <property type="protein sequence ID" value="AT1G78870.3"/>
    <property type="gene ID" value="AT1G78870"/>
</dbReference>
<dbReference type="KEGG" id="ath:AT1G78870"/>
<dbReference type="Araport" id="AT1G78870"/>
<dbReference type="TAIR" id="AT1G78870">
    <property type="gene designation" value="UBC35"/>
</dbReference>
<dbReference type="eggNOG" id="KOG0417">
    <property type="taxonomic scope" value="Eukaryota"/>
</dbReference>
<dbReference type="HOGENOM" id="CLU_030988_13_2_1"/>
<dbReference type="InParanoid" id="Q94A97"/>
<dbReference type="OMA" id="NDAANLW"/>
<dbReference type="OrthoDB" id="1027250at2759"/>
<dbReference type="PhylomeDB" id="Q94A97"/>
<dbReference type="BRENDA" id="2.3.2.23">
    <property type="organism ID" value="399"/>
</dbReference>
<dbReference type="UniPathway" id="UPA00143"/>
<dbReference type="PRO" id="PR:Q94A97"/>
<dbReference type="Proteomes" id="UP000006548">
    <property type="component" value="Chromosome 1"/>
</dbReference>
<dbReference type="ExpressionAtlas" id="Q94A97">
    <property type="expression patterns" value="baseline and differential"/>
</dbReference>
<dbReference type="GO" id="GO:0005739">
    <property type="term" value="C:mitochondrion"/>
    <property type="evidence" value="ECO:0007005"/>
    <property type="project" value="TAIR"/>
</dbReference>
<dbReference type="GO" id="GO:0031372">
    <property type="term" value="C:UBC13-MMS2 complex"/>
    <property type="evidence" value="ECO:0000353"/>
    <property type="project" value="TAIR"/>
</dbReference>
<dbReference type="GO" id="GO:0005524">
    <property type="term" value="F:ATP binding"/>
    <property type="evidence" value="ECO:0007669"/>
    <property type="project" value="UniProtKB-KW"/>
</dbReference>
<dbReference type="GO" id="GO:0061631">
    <property type="term" value="F:ubiquitin conjugating enzyme activity"/>
    <property type="evidence" value="ECO:0007669"/>
    <property type="project" value="UniProtKB-EC"/>
</dbReference>
<dbReference type="GO" id="GO:0004842">
    <property type="term" value="F:ubiquitin-protein transferase activity"/>
    <property type="evidence" value="ECO:0000314"/>
    <property type="project" value="TAIR"/>
</dbReference>
<dbReference type="GO" id="GO:0006301">
    <property type="term" value="P:postreplication repair"/>
    <property type="evidence" value="ECO:0000316"/>
    <property type="project" value="TAIR"/>
</dbReference>
<dbReference type="GO" id="GO:0016567">
    <property type="term" value="P:protein ubiquitination"/>
    <property type="evidence" value="ECO:0007669"/>
    <property type="project" value="UniProtKB-UniPathway"/>
</dbReference>
<dbReference type="GO" id="GO:0010039">
    <property type="term" value="P:response to iron ion"/>
    <property type="evidence" value="ECO:0000315"/>
    <property type="project" value="TAIR"/>
</dbReference>
<dbReference type="GO" id="GO:0010053">
    <property type="term" value="P:root epidermal cell differentiation"/>
    <property type="evidence" value="ECO:0000316"/>
    <property type="project" value="TAIR"/>
</dbReference>
<dbReference type="GO" id="GO:0006511">
    <property type="term" value="P:ubiquitin-dependent protein catabolic process"/>
    <property type="evidence" value="ECO:0000314"/>
    <property type="project" value="TAIR"/>
</dbReference>
<dbReference type="CDD" id="cd23813">
    <property type="entry name" value="UBCc_UBE2N"/>
    <property type="match status" value="1"/>
</dbReference>
<dbReference type="FunFam" id="3.10.110.10:FF:000143">
    <property type="entry name" value="Ubiquitin-conjugating enzyme E2 36"/>
    <property type="match status" value="1"/>
</dbReference>
<dbReference type="Gene3D" id="3.10.110.10">
    <property type="entry name" value="Ubiquitin Conjugating Enzyme"/>
    <property type="match status" value="1"/>
</dbReference>
<dbReference type="InterPro" id="IPR000608">
    <property type="entry name" value="UBQ-conjugat_E2_core"/>
</dbReference>
<dbReference type="InterPro" id="IPR023313">
    <property type="entry name" value="UBQ-conjugating_AS"/>
</dbReference>
<dbReference type="InterPro" id="IPR016135">
    <property type="entry name" value="UBQ-conjugating_enzyme/RWD"/>
</dbReference>
<dbReference type="PANTHER" id="PTHR24068">
    <property type="entry name" value="UBIQUITIN-CONJUGATING ENZYME E2"/>
    <property type="match status" value="1"/>
</dbReference>
<dbReference type="Pfam" id="PF00179">
    <property type="entry name" value="UQ_con"/>
    <property type="match status" value="1"/>
</dbReference>
<dbReference type="SMART" id="SM00212">
    <property type="entry name" value="UBCc"/>
    <property type="match status" value="1"/>
</dbReference>
<dbReference type="SUPFAM" id="SSF54495">
    <property type="entry name" value="UBC-like"/>
    <property type="match status" value="1"/>
</dbReference>
<dbReference type="PROSITE" id="PS00183">
    <property type="entry name" value="UBC_1"/>
    <property type="match status" value="1"/>
</dbReference>
<dbReference type="PROSITE" id="PS50127">
    <property type="entry name" value="UBC_2"/>
    <property type="match status" value="1"/>
</dbReference>
<proteinExistence type="evidence at protein level"/>
<accession>Q94A97</accession>
<accession>Q2V4C1</accession>
<accession>Q9ZVA6</accession>
<feature type="chain" id="PRO_0000345200" description="Ubiquitin-conjugating enzyme E2 35">
    <location>
        <begin position="1"/>
        <end position="153"/>
    </location>
</feature>
<feature type="domain" description="UBC core" evidence="1">
    <location>
        <begin position="5"/>
        <end position="151"/>
    </location>
</feature>
<feature type="active site" description="Glycyl thioester intermediate" evidence="1 2">
    <location>
        <position position="89"/>
    </location>
</feature>
<feature type="splice variant" id="VSP_034929" description="In isoform 2." evidence="8">
    <original>G</original>
    <variation>GR</variation>
    <location>
        <position position="51"/>
    </location>
</feature>
<feature type="splice variant" id="VSP_034930" description="In isoform 3." evidence="8">
    <original>SIQA</original>
    <variation>RYMS</variation>
    <location>
        <begin position="109"/>
        <end position="112"/>
    </location>
</feature>
<feature type="splice variant" id="VSP_034931" description="In isoform 3." evidence="8">
    <location>
        <begin position="113"/>
        <end position="153"/>
    </location>
</feature>
<protein>
    <recommendedName>
        <fullName>Ubiquitin-conjugating enzyme E2 35</fullName>
        <ecNumber>2.3.2.23</ecNumber>
    </recommendedName>
    <alternativeName>
        <fullName>E2 ubiquitin-conjugating enzyme 35</fullName>
    </alternativeName>
    <alternativeName>
        <fullName>Ubiquitin carrier protein 35</fullName>
    </alternativeName>
</protein>
<reference key="1">
    <citation type="journal article" date="2005" name="Plant Physiol.">
        <title>Genome analysis and functional characterization of the E2 and RING-type E3 ligase ubiquitination enzymes of Arabidopsis.</title>
        <authorList>
            <person name="Kraft E."/>
            <person name="Stone S.L."/>
            <person name="Ma L."/>
            <person name="Su N."/>
            <person name="Gao Y."/>
            <person name="Lau O.-S."/>
            <person name="Deng X.-W."/>
            <person name="Callis J."/>
        </authorList>
    </citation>
    <scope>NUCLEOTIDE SEQUENCE [MRNA] (ISOFORM 1)</scope>
    <scope>FUNCTION</scope>
    <scope>TISSUE SPECIFICITY</scope>
    <scope>GENE FAMILY</scope>
    <scope>NOMENCLATURE</scope>
</reference>
<reference key="2">
    <citation type="journal article" date="2000" name="Nature">
        <title>Sequence and analysis of chromosome 1 of the plant Arabidopsis thaliana.</title>
        <authorList>
            <person name="Theologis A."/>
            <person name="Ecker J.R."/>
            <person name="Palm C.J."/>
            <person name="Federspiel N.A."/>
            <person name="Kaul S."/>
            <person name="White O."/>
            <person name="Alonso J."/>
            <person name="Altafi H."/>
            <person name="Araujo R."/>
            <person name="Bowman C.L."/>
            <person name="Brooks S.Y."/>
            <person name="Buehler E."/>
            <person name="Chan A."/>
            <person name="Chao Q."/>
            <person name="Chen H."/>
            <person name="Cheuk R.F."/>
            <person name="Chin C.W."/>
            <person name="Chung M.K."/>
            <person name="Conn L."/>
            <person name="Conway A.B."/>
            <person name="Conway A.R."/>
            <person name="Creasy T.H."/>
            <person name="Dewar K."/>
            <person name="Dunn P."/>
            <person name="Etgu P."/>
            <person name="Feldblyum T.V."/>
            <person name="Feng J.-D."/>
            <person name="Fong B."/>
            <person name="Fujii C.Y."/>
            <person name="Gill J.E."/>
            <person name="Goldsmith A.D."/>
            <person name="Haas B."/>
            <person name="Hansen N.F."/>
            <person name="Hughes B."/>
            <person name="Huizar L."/>
            <person name="Hunter J.L."/>
            <person name="Jenkins J."/>
            <person name="Johnson-Hopson C."/>
            <person name="Khan S."/>
            <person name="Khaykin E."/>
            <person name="Kim C.J."/>
            <person name="Koo H.L."/>
            <person name="Kremenetskaia I."/>
            <person name="Kurtz D.B."/>
            <person name="Kwan A."/>
            <person name="Lam B."/>
            <person name="Langin-Hooper S."/>
            <person name="Lee A."/>
            <person name="Lee J.M."/>
            <person name="Lenz C.A."/>
            <person name="Li J.H."/>
            <person name="Li Y.-P."/>
            <person name="Lin X."/>
            <person name="Liu S.X."/>
            <person name="Liu Z.A."/>
            <person name="Luros J.S."/>
            <person name="Maiti R."/>
            <person name="Marziali A."/>
            <person name="Militscher J."/>
            <person name="Miranda M."/>
            <person name="Nguyen M."/>
            <person name="Nierman W.C."/>
            <person name="Osborne B.I."/>
            <person name="Pai G."/>
            <person name="Peterson J."/>
            <person name="Pham P.K."/>
            <person name="Rizzo M."/>
            <person name="Rooney T."/>
            <person name="Rowley D."/>
            <person name="Sakano H."/>
            <person name="Salzberg S.L."/>
            <person name="Schwartz J.R."/>
            <person name="Shinn P."/>
            <person name="Southwick A.M."/>
            <person name="Sun H."/>
            <person name="Tallon L.J."/>
            <person name="Tambunga G."/>
            <person name="Toriumi M.J."/>
            <person name="Town C.D."/>
            <person name="Utterback T."/>
            <person name="Van Aken S."/>
            <person name="Vaysberg M."/>
            <person name="Vysotskaia V.S."/>
            <person name="Walker M."/>
            <person name="Wu D."/>
            <person name="Yu G."/>
            <person name="Fraser C.M."/>
            <person name="Venter J.C."/>
            <person name="Davis R.W."/>
        </authorList>
    </citation>
    <scope>NUCLEOTIDE SEQUENCE [LARGE SCALE GENOMIC DNA]</scope>
    <source>
        <strain>cv. Columbia</strain>
    </source>
</reference>
<reference key="3">
    <citation type="journal article" date="2017" name="Plant J.">
        <title>Araport11: a complete reannotation of the Arabidopsis thaliana reference genome.</title>
        <authorList>
            <person name="Cheng C.Y."/>
            <person name="Krishnakumar V."/>
            <person name="Chan A.P."/>
            <person name="Thibaud-Nissen F."/>
            <person name="Schobel S."/>
            <person name="Town C.D."/>
        </authorList>
    </citation>
    <scope>GENOME REANNOTATION</scope>
    <source>
        <strain>cv. Columbia</strain>
    </source>
</reference>
<reference key="4">
    <citation type="journal article" date="2003" name="Science">
        <title>Empirical analysis of transcriptional activity in the Arabidopsis genome.</title>
        <authorList>
            <person name="Yamada K."/>
            <person name="Lim J."/>
            <person name="Dale J.M."/>
            <person name="Chen H."/>
            <person name="Shinn P."/>
            <person name="Palm C.J."/>
            <person name="Southwick A.M."/>
            <person name="Wu H.C."/>
            <person name="Kim C.J."/>
            <person name="Nguyen M."/>
            <person name="Pham P.K."/>
            <person name="Cheuk R.F."/>
            <person name="Karlin-Newmann G."/>
            <person name="Liu S.X."/>
            <person name="Lam B."/>
            <person name="Sakano H."/>
            <person name="Wu T."/>
            <person name="Yu G."/>
            <person name="Miranda M."/>
            <person name="Quach H.L."/>
            <person name="Tripp M."/>
            <person name="Chang C.H."/>
            <person name="Lee J.M."/>
            <person name="Toriumi M.J."/>
            <person name="Chan M.M."/>
            <person name="Tang C.C."/>
            <person name="Onodera C.S."/>
            <person name="Deng J.M."/>
            <person name="Akiyama K."/>
            <person name="Ansari Y."/>
            <person name="Arakawa T."/>
            <person name="Banh J."/>
            <person name="Banno F."/>
            <person name="Bowser L."/>
            <person name="Brooks S.Y."/>
            <person name="Carninci P."/>
            <person name="Chao Q."/>
            <person name="Choy N."/>
            <person name="Enju A."/>
            <person name="Goldsmith A.D."/>
            <person name="Gurjal M."/>
            <person name="Hansen N.F."/>
            <person name="Hayashizaki Y."/>
            <person name="Johnson-Hopson C."/>
            <person name="Hsuan V.W."/>
            <person name="Iida K."/>
            <person name="Karnes M."/>
            <person name="Khan S."/>
            <person name="Koesema E."/>
            <person name="Ishida J."/>
            <person name="Jiang P.X."/>
            <person name="Jones T."/>
            <person name="Kawai J."/>
            <person name="Kamiya A."/>
            <person name="Meyers C."/>
            <person name="Nakajima M."/>
            <person name="Narusaka M."/>
            <person name="Seki M."/>
            <person name="Sakurai T."/>
            <person name="Satou M."/>
            <person name="Tamse R."/>
            <person name="Vaysberg M."/>
            <person name="Wallender E.K."/>
            <person name="Wong C."/>
            <person name="Yamamura Y."/>
            <person name="Yuan S."/>
            <person name="Shinozaki K."/>
            <person name="Davis R.W."/>
            <person name="Theologis A."/>
            <person name="Ecker J.R."/>
        </authorList>
    </citation>
    <scope>NUCLEOTIDE SEQUENCE [LARGE SCALE MRNA] (ISOFORM 1)</scope>
    <source>
        <strain>cv. Columbia</strain>
    </source>
</reference>
<reference key="5">
    <citation type="submission" date="2002-03" db="EMBL/GenBank/DDBJ databases">
        <title>Full-length cDNA from Arabidopsis thaliana.</title>
        <authorList>
            <person name="Brover V.V."/>
            <person name="Troukhan M.E."/>
            <person name="Alexandrov N.A."/>
            <person name="Lu Y.-P."/>
            <person name="Flavell R.B."/>
            <person name="Feldmann K.A."/>
        </authorList>
    </citation>
    <scope>NUCLEOTIDE SEQUENCE [LARGE SCALE MRNA] (ISOFORM 1)</scope>
</reference>
<reference key="6">
    <citation type="journal article" date="2006" name="Plant Mol. Biol.">
        <title>Arabidopsis thaliana UBC13: implication of error-free DNA damage tolerance and Lys63-linked polyubiquitylation in plants.</title>
        <authorList>
            <person name="Wen R."/>
            <person name="Newton L."/>
            <person name="Li G."/>
            <person name="Wang H."/>
            <person name="Xiao W."/>
        </authorList>
    </citation>
    <scope>FUNCTION</scope>
    <scope>INTERACTION WITH YEAST AND HUMAN MMS2</scope>
    <scope>TISSUE SPECIFICITY</scope>
    <scope>INDUCTION</scope>
</reference>
<reference key="7">
    <citation type="journal article" date="2007" name="Plant Cell">
        <title>Ubiquitin lysine 63 chain forming ligases regulate apical dominance in Arabidopsis.</title>
        <authorList>
            <person name="Yin X.-J."/>
            <person name="Volk S."/>
            <person name="Ljung K."/>
            <person name="Mehlmer N."/>
            <person name="Dolezal K."/>
            <person name="Ditengou F."/>
            <person name="Hanano S."/>
            <person name="Davis S.J."/>
            <person name="Schmelzer E."/>
            <person name="Sandberg G."/>
            <person name="Teige M."/>
            <person name="Palme K."/>
            <person name="Pickart C."/>
            <person name="Bachmair A."/>
        </authorList>
    </citation>
    <scope>INTERACTION WITH RGLG2</scope>
</reference>
<reference key="8">
    <citation type="journal article" date="2008" name="Plant Cell">
        <title>Arabidopsis UEV1D promotes lysine-63-linked polyubiquitination and is involved in DNA damage response.</title>
        <authorList>
            <person name="Wen R."/>
            <person name="Torres-Acosta J.A."/>
            <person name="Pastushok L."/>
            <person name="Lai X."/>
            <person name="Pelzer L."/>
            <person name="Wang H."/>
            <person name="Xiao W."/>
        </authorList>
    </citation>
    <scope>INTERACTION WITH UEV1A; UEV1B; UEV1C AND UEV1D</scope>
</reference>
<reference key="9">
    <citation type="journal article" date="2010" name="Plant J.">
        <title>A lysine-63-linked ubiquitin chain-forming conjugase, UBC13, promotes the developmental responses to iron deficiency in Arabidopsis roots.</title>
        <authorList>
            <person name="Li W."/>
            <person name="Schmidt W."/>
        </authorList>
    </citation>
    <scope>FUNCTION</scope>
    <scope>INDUCTION BY IRON</scope>
    <scope>TISSUE SPECIFICITY</scope>
    <scope>DISRUPTION PHENOTYPE</scope>
</reference>
<sequence length="153" mass="17192">MANSNLPRRIIKETQRLLSEPAPGISASPSEDNMRYFNVMILGPTQSPYEGGVFKLELFLPEEYPMAAPKVRFLTKIYHPNIDKLGRICLDILKDKWSPALQIRTVLLSIQALLSAPNPDDPLSENIAKHWKSNEAEAVDTAKEWTRLYASGA</sequence>
<gene>
    <name type="primary">UBC35</name>
    <name type="synonym">UBC13A</name>
    <name type="synonym">UBG13A</name>
    <name type="ordered locus">At1g78870</name>
    <name type="ORF">F9K20.8</name>
</gene>